<sequence>MQFDRLLTEARLATMVAGDDGYGVIEKAALGIKDGRIAWIGPMSEIPGEARETERLASRWVTPALIDCHTHLVFAGDRSDEFERRLGGESYESISRSGGGIARSVEATRAAGAAELAAGALTRIDALAQEGVGTVEIKSGYGLTRESERTMLRAARGVERASGMRVSATLLAAHAVPPEYKGESGRYIDEICIPLIREAAREGLADAVDAYCEGIGFSPEETRRLFIAAKAAGLPVKLHADQLSDTGGARLVAEFGGLSADHIEYTNAEGIAAMAKAGTVGVLLPGAFYALNETKKPPVEAMRAAGVDMAVATDANPGTSPLVSLLTAANMACILFGLTLPEAFAGMTRNAARALGLHGEIGTLEVGKAADLAIWDVERPAEIIQWIGRRPLHGRILAGEWQ</sequence>
<comment type="function">
    <text evidence="1">Catalyzes the hydrolytic cleavage of the carbon-nitrogen bond in imidazolone-5-propanoate to yield N-formimidoyl-L-glutamate. It is the third step in the universal histidine degradation pathway.</text>
</comment>
<comment type="catalytic activity">
    <reaction evidence="1">
        <text>4-imidazolone-5-propanoate + H2O = N-formimidoyl-L-glutamate</text>
        <dbReference type="Rhea" id="RHEA:23660"/>
        <dbReference type="ChEBI" id="CHEBI:15377"/>
        <dbReference type="ChEBI" id="CHEBI:58928"/>
        <dbReference type="ChEBI" id="CHEBI:77893"/>
        <dbReference type="EC" id="3.5.2.7"/>
    </reaction>
</comment>
<comment type="cofactor">
    <cofactor evidence="1">
        <name>Zn(2+)</name>
        <dbReference type="ChEBI" id="CHEBI:29105"/>
    </cofactor>
    <cofactor evidence="1">
        <name>Fe(3+)</name>
        <dbReference type="ChEBI" id="CHEBI:29034"/>
    </cofactor>
    <text evidence="1">Binds 1 zinc or iron ion per subunit.</text>
</comment>
<comment type="pathway">
    <text evidence="1">Amino-acid degradation; L-histidine degradation into L-glutamate; N-formimidoyl-L-glutamate from L-histidine: step 3/3.</text>
</comment>
<comment type="subcellular location">
    <subcellularLocation>
        <location evidence="1">Cytoplasm</location>
    </subcellularLocation>
</comment>
<comment type="similarity">
    <text evidence="1">Belongs to the metallo-dependent hydrolases superfamily. HutI family.</text>
</comment>
<feature type="chain" id="PRO_0000306472" description="Imidazolonepropionase">
    <location>
        <begin position="1"/>
        <end position="402"/>
    </location>
</feature>
<feature type="binding site" evidence="1">
    <location>
        <position position="69"/>
    </location>
    <ligand>
        <name>Fe(3+)</name>
        <dbReference type="ChEBI" id="CHEBI:29034"/>
    </ligand>
</feature>
<feature type="binding site" evidence="1">
    <location>
        <position position="69"/>
    </location>
    <ligand>
        <name>Zn(2+)</name>
        <dbReference type="ChEBI" id="CHEBI:29105"/>
    </ligand>
</feature>
<feature type="binding site" evidence="1">
    <location>
        <position position="71"/>
    </location>
    <ligand>
        <name>Fe(3+)</name>
        <dbReference type="ChEBI" id="CHEBI:29034"/>
    </ligand>
</feature>
<feature type="binding site" evidence="1">
    <location>
        <position position="71"/>
    </location>
    <ligand>
        <name>Zn(2+)</name>
        <dbReference type="ChEBI" id="CHEBI:29105"/>
    </ligand>
</feature>
<feature type="binding site" evidence="1">
    <location>
        <position position="78"/>
    </location>
    <ligand>
        <name>4-imidazolone-5-propanoate</name>
        <dbReference type="ChEBI" id="CHEBI:77893"/>
    </ligand>
</feature>
<feature type="binding site" evidence="1">
    <location>
        <position position="141"/>
    </location>
    <ligand>
        <name>4-imidazolone-5-propanoate</name>
        <dbReference type="ChEBI" id="CHEBI:77893"/>
    </ligand>
</feature>
<feature type="binding site" evidence="1">
    <location>
        <position position="141"/>
    </location>
    <ligand>
        <name>N-formimidoyl-L-glutamate</name>
        <dbReference type="ChEBI" id="CHEBI:58928"/>
    </ligand>
</feature>
<feature type="binding site" evidence="1">
    <location>
        <position position="174"/>
    </location>
    <ligand>
        <name>4-imidazolone-5-propanoate</name>
        <dbReference type="ChEBI" id="CHEBI:77893"/>
    </ligand>
</feature>
<feature type="binding site" evidence="1">
    <location>
        <position position="239"/>
    </location>
    <ligand>
        <name>Fe(3+)</name>
        <dbReference type="ChEBI" id="CHEBI:29034"/>
    </ligand>
</feature>
<feature type="binding site" evidence="1">
    <location>
        <position position="239"/>
    </location>
    <ligand>
        <name>Zn(2+)</name>
        <dbReference type="ChEBI" id="CHEBI:29105"/>
    </ligand>
</feature>
<feature type="binding site" evidence="1">
    <location>
        <position position="242"/>
    </location>
    <ligand>
        <name>4-imidazolone-5-propanoate</name>
        <dbReference type="ChEBI" id="CHEBI:77893"/>
    </ligand>
</feature>
<feature type="binding site" evidence="1">
    <location>
        <position position="314"/>
    </location>
    <ligand>
        <name>Fe(3+)</name>
        <dbReference type="ChEBI" id="CHEBI:29034"/>
    </ligand>
</feature>
<feature type="binding site" evidence="1">
    <location>
        <position position="314"/>
    </location>
    <ligand>
        <name>Zn(2+)</name>
        <dbReference type="ChEBI" id="CHEBI:29105"/>
    </ligand>
</feature>
<feature type="binding site" evidence="1">
    <location>
        <position position="316"/>
    </location>
    <ligand>
        <name>N-formimidoyl-L-glutamate</name>
        <dbReference type="ChEBI" id="CHEBI:58928"/>
    </ligand>
</feature>
<feature type="binding site" evidence="1">
    <location>
        <position position="318"/>
    </location>
    <ligand>
        <name>N-formimidoyl-L-glutamate</name>
        <dbReference type="ChEBI" id="CHEBI:58928"/>
    </ligand>
</feature>
<feature type="binding site" evidence="1">
    <location>
        <position position="319"/>
    </location>
    <ligand>
        <name>4-imidazolone-5-propanoate</name>
        <dbReference type="ChEBI" id="CHEBI:77893"/>
    </ligand>
</feature>
<evidence type="ECO:0000255" key="1">
    <source>
        <dbReference type="HAMAP-Rule" id="MF_00372"/>
    </source>
</evidence>
<proteinExistence type="inferred from homology"/>
<reference key="1">
    <citation type="submission" date="2006-08" db="EMBL/GenBank/DDBJ databases">
        <title>Complete sequence of Maricaulis maris MCS10.</title>
        <authorList>
            <consortium name="US DOE Joint Genome Institute"/>
            <person name="Copeland A."/>
            <person name="Lucas S."/>
            <person name="Lapidus A."/>
            <person name="Barry K."/>
            <person name="Detter J.C."/>
            <person name="Glavina del Rio T."/>
            <person name="Hammon N."/>
            <person name="Israni S."/>
            <person name="Dalin E."/>
            <person name="Tice H."/>
            <person name="Pitluck S."/>
            <person name="Saunders E."/>
            <person name="Brettin T."/>
            <person name="Bruce D."/>
            <person name="Han C."/>
            <person name="Tapia R."/>
            <person name="Gilna P."/>
            <person name="Schmutz J."/>
            <person name="Larimer F."/>
            <person name="Land M."/>
            <person name="Hauser L."/>
            <person name="Kyrpides N."/>
            <person name="Mikhailova N."/>
            <person name="Viollier P."/>
            <person name="Stephens C."/>
            <person name="Richardson P."/>
        </authorList>
    </citation>
    <scope>NUCLEOTIDE SEQUENCE [LARGE SCALE GENOMIC DNA]</scope>
    <source>
        <strain>MCS10</strain>
    </source>
</reference>
<dbReference type="EC" id="3.5.2.7" evidence="1"/>
<dbReference type="EMBL" id="CP000449">
    <property type="protein sequence ID" value="ABI65896.1"/>
    <property type="molecule type" value="Genomic_DNA"/>
</dbReference>
<dbReference type="RefSeq" id="WP_011643543.1">
    <property type="nucleotide sequence ID" value="NC_008347.1"/>
</dbReference>
<dbReference type="SMR" id="Q0AP91"/>
<dbReference type="STRING" id="394221.Mmar10_1604"/>
<dbReference type="KEGG" id="mmr:Mmar10_1604"/>
<dbReference type="eggNOG" id="COG1228">
    <property type="taxonomic scope" value="Bacteria"/>
</dbReference>
<dbReference type="HOGENOM" id="CLU_041647_0_0_5"/>
<dbReference type="OrthoDB" id="9776455at2"/>
<dbReference type="UniPathway" id="UPA00379">
    <property type="reaction ID" value="UER00551"/>
</dbReference>
<dbReference type="Proteomes" id="UP000001964">
    <property type="component" value="Chromosome"/>
</dbReference>
<dbReference type="GO" id="GO:0005737">
    <property type="term" value="C:cytoplasm"/>
    <property type="evidence" value="ECO:0007669"/>
    <property type="project" value="UniProtKB-SubCell"/>
</dbReference>
<dbReference type="GO" id="GO:0050480">
    <property type="term" value="F:imidazolonepropionase activity"/>
    <property type="evidence" value="ECO:0007669"/>
    <property type="project" value="UniProtKB-UniRule"/>
</dbReference>
<dbReference type="GO" id="GO:0005506">
    <property type="term" value="F:iron ion binding"/>
    <property type="evidence" value="ECO:0007669"/>
    <property type="project" value="UniProtKB-UniRule"/>
</dbReference>
<dbReference type="GO" id="GO:0008270">
    <property type="term" value="F:zinc ion binding"/>
    <property type="evidence" value="ECO:0007669"/>
    <property type="project" value="UniProtKB-UniRule"/>
</dbReference>
<dbReference type="GO" id="GO:0019556">
    <property type="term" value="P:L-histidine catabolic process to glutamate and formamide"/>
    <property type="evidence" value="ECO:0007669"/>
    <property type="project" value="UniProtKB-UniPathway"/>
</dbReference>
<dbReference type="GO" id="GO:0019557">
    <property type="term" value="P:L-histidine catabolic process to glutamate and formate"/>
    <property type="evidence" value="ECO:0007669"/>
    <property type="project" value="UniProtKB-UniPathway"/>
</dbReference>
<dbReference type="FunFam" id="3.20.20.140:FF:000007">
    <property type="entry name" value="Imidazolonepropionase"/>
    <property type="match status" value="1"/>
</dbReference>
<dbReference type="Gene3D" id="3.20.20.140">
    <property type="entry name" value="Metal-dependent hydrolases"/>
    <property type="match status" value="1"/>
</dbReference>
<dbReference type="Gene3D" id="2.30.40.10">
    <property type="entry name" value="Urease, subunit C, domain 1"/>
    <property type="match status" value="1"/>
</dbReference>
<dbReference type="HAMAP" id="MF_00372">
    <property type="entry name" value="HutI"/>
    <property type="match status" value="1"/>
</dbReference>
<dbReference type="InterPro" id="IPR006680">
    <property type="entry name" value="Amidohydro-rel"/>
</dbReference>
<dbReference type="InterPro" id="IPR005920">
    <property type="entry name" value="HutI"/>
</dbReference>
<dbReference type="InterPro" id="IPR011059">
    <property type="entry name" value="Metal-dep_hydrolase_composite"/>
</dbReference>
<dbReference type="InterPro" id="IPR032466">
    <property type="entry name" value="Metal_Hydrolase"/>
</dbReference>
<dbReference type="NCBIfam" id="TIGR01224">
    <property type="entry name" value="hutI"/>
    <property type="match status" value="1"/>
</dbReference>
<dbReference type="PANTHER" id="PTHR42752">
    <property type="entry name" value="IMIDAZOLONEPROPIONASE"/>
    <property type="match status" value="1"/>
</dbReference>
<dbReference type="PANTHER" id="PTHR42752:SF1">
    <property type="entry name" value="IMIDAZOLONEPROPIONASE-RELATED"/>
    <property type="match status" value="1"/>
</dbReference>
<dbReference type="Pfam" id="PF01979">
    <property type="entry name" value="Amidohydro_1"/>
    <property type="match status" value="1"/>
</dbReference>
<dbReference type="SUPFAM" id="SSF51338">
    <property type="entry name" value="Composite domain of metallo-dependent hydrolases"/>
    <property type="match status" value="1"/>
</dbReference>
<dbReference type="SUPFAM" id="SSF51556">
    <property type="entry name" value="Metallo-dependent hydrolases"/>
    <property type="match status" value="1"/>
</dbReference>
<protein>
    <recommendedName>
        <fullName evidence="1">Imidazolonepropionase</fullName>
        <ecNumber evidence="1">3.5.2.7</ecNumber>
    </recommendedName>
    <alternativeName>
        <fullName evidence="1">Imidazolone-5-propionate hydrolase</fullName>
    </alternativeName>
</protein>
<accession>Q0AP91</accession>
<gene>
    <name evidence="1" type="primary">hutI</name>
    <name type="ordered locus">Mmar10_1604</name>
</gene>
<organism>
    <name type="scientific">Maricaulis maris (strain MCS10)</name>
    <name type="common">Caulobacter maris</name>
    <dbReference type="NCBI Taxonomy" id="394221"/>
    <lineage>
        <taxon>Bacteria</taxon>
        <taxon>Pseudomonadati</taxon>
        <taxon>Pseudomonadota</taxon>
        <taxon>Alphaproteobacteria</taxon>
        <taxon>Maricaulales</taxon>
        <taxon>Maricaulaceae</taxon>
        <taxon>Maricaulis</taxon>
    </lineage>
</organism>
<keyword id="KW-0963">Cytoplasm</keyword>
<keyword id="KW-0369">Histidine metabolism</keyword>
<keyword id="KW-0378">Hydrolase</keyword>
<keyword id="KW-0408">Iron</keyword>
<keyword id="KW-0479">Metal-binding</keyword>
<keyword id="KW-1185">Reference proteome</keyword>
<keyword id="KW-0862">Zinc</keyword>
<name>HUTI_MARMM</name>